<name>NRAM_I68A3</name>
<comment type="function">
    <text evidence="1">Catalyzes the removal of terminal sialic acid residues from viral and cellular glycoconjugates. Cleaves off the terminal sialic acids on the glycosylated HA during virus budding to facilitate virus release. Additionally helps virus spread through the circulation by further removing sialic acids from the cell surface. These cleavages prevent self-aggregation and ensure the efficient spread of the progeny virus from cell to cell. Otherwise, infection would be limited to one round of replication. Described as a receptor-destroying enzyme because it cleaves a terminal sialic acid from the cellular receptors. May facilitate viral invasion of the upper airways by cleaving the sialic acid moieties on the mucin of the airway epithelial cells. Likely to plays a role in the budding process through its association with lipid rafts during intracellular transport. May additionally display a raft-association independent effect on budding. Plays a role in the determination of host range restriction on replication and virulence. Sialidase activity in late endosome/lysosome traffic seems to enhance virus replication.</text>
</comment>
<comment type="catalytic activity">
    <reaction evidence="1">
        <text>Hydrolysis of alpha-(2-&gt;3)-, alpha-(2-&gt;6)-, alpha-(2-&gt;8)- glycosidic linkages of terminal sialic acid residues in oligosaccharides, glycoproteins, glycolipids, colominic acid and synthetic substrates.</text>
        <dbReference type="EC" id="3.2.1.18"/>
    </reaction>
</comment>
<comment type="cofactor">
    <cofactor evidence="1">
        <name>Ca(2+)</name>
        <dbReference type="ChEBI" id="CHEBI:29108"/>
    </cofactor>
</comment>
<comment type="activity regulation">
    <text evidence="1">Inhibited by the neuraminidase inhibitors zanamivir (Relenza) and oseltamivir (Tamiflu). These drugs interfere with the release of progeny virus from infected cells and are effective against all influenza strains. Resistance to neuraminidase inhibitors is quite rare.</text>
</comment>
<comment type="subunit">
    <text evidence="1">Homotetramer.</text>
</comment>
<comment type="subcellular location">
    <subcellularLocation>
        <location evidence="1">Virion membrane</location>
    </subcellularLocation>
    <subcellularLocation>
        <location evidence="1">Host apical cell membrane</location>
        <topology evidence="1">Single-pass type II membrane protein</topology>
    </subcellularLocation>
    <text evidence="1">Preferentially accumulates at the apical plasma membrane in infected polarized epithelial cells, which is the virus assembly site. Uses lipid rafts for cell surface transport and apical sorting. In the virion, forms a mushroom-shaped spike on the surface of the membrane.</text>
</comment>
<comment type="domain">
    <text evidence="1">Intact N-terminus is essential for virion morphogenesis. Possesses two apical sorting signals, one in the ectodomain, which is likely to be a glycan, and the other in the transmembrane domain. The transmembrane domain also plays a role in lipid raft association.</text>
</comment>
<comment type="PTM">
    <text evidence="1">N-glycosylated.</text>
</comment>
<comment type="miscellaneous">
    <text>The influenza A genome consist of 8 RNA segments. Genetic variation of hemagglutinin and/or neuraminidase genes results in the emergence of new influenza strains. The mechanism of variation can be the result of point mutations or the result of genetic reassortment between segments of two different strains.</text>
</comment>
<comment type="similarity">
    <text evidence="1">Belongs to the glycosyl hydrolase 34 family.</text>
</comment>
<evidence type="ECO:0000255" key="1">
    <source>
        <dbReference type="HAMAP-Rule" id="MF_04071"/>
    </source>
</evidence>
<dbReference type="EC" id="3.2.1.18" evidence="1"/>
<dbReference type="EMBL" id="AY207528">
    <property type="protein sequence ID" value="AAO62042.1"/>
    <property type="molecule type" value="Genomic_RNA"/>
</dbReference>
<dbReference type="EMBL" id="CY014660">
    <property type="protein sequence ID" value="ABI84520.1"/>
    <property type="molecule type" value="Genomic_RNA"/>
</dbReference>
<dbReference type="EMBL" id="AB289344">
    <property type="protein sequence ID" value="BAF43469.1"/>
    <property type="molecule type" value="Genomic_RNA"/>
</dbReference>
<dbReference type="EMBL" id="K01013">
    <property type="protein sequence ID" value="AAA43364.1"/>
    <property type="molecule type" value="Genomic_RNA"/>
</dbReference>
<dbReference type="EMBL" id="V01093">
    <property type="protein sequence ID" value="CAA24277.1"/>
    <property type="molecule type" value="Genomic_RNA"/>
</dbReference>
<dbReference type="SMR" id="P03477"/>
<dbReference type="CAZy" id="GH34">
    <property type="family name" value="Glycoside Hydrolase Family 34"/>
</dbReference>
<dbReference type="GlyCosmos" id="P03477">
    <property type="glycosylation" value="9 sites, No reported glycans"/>
</dbReference>
<dbReference type="PRO" id="PR:P03477"/>
<dbReference type="Proteomes" id="UP000007770">
    <property type="component" value="Genome"/>
</dbReference>
<dbReference type="Proteomes" id="UP000131583">
    <property type="component" value="Genome"/>
</dbReference>
<dbReference type="GO" id="GO:0020002">
    <property type="term" value="C:host cell plasma membrane"/>
    <property type="evidence" value="ECO:0007669"/>
    <property type="project" value="UniProtKB-SubCell"/>
</dbReference>
<dbReference type="GO" id="GO:0016020">
    <property type="term" value="C:membrane"/>
    <property type="evidence" value="ECO:0007669"/>
    <property type="project" value="UniProtKB-UniRule"/>
</dbReference>
<dbReference type="GO" id="GO:0055036">
    <property type="term" value="C:virion membrane"/>
    <property type="evidence" value="ECO:0007669"/>
    <property type="project" value="UniProtKB-SubCell"/>
</dbReference>
<dbReference type="GO" id="GO:0004308">
    <property type="term" value="F:exo-alpha-sialidase activity"/>
    <property type="evidence" value="ECO:0007669"/>
    <property type="project" value="UniProtKB-UniRule"/>
</dbReference>
<dbReference type="GO" id="GO:0046872">
    <property type="term" value="F:metal ion binding"/>
    <property type="evidence" value="ECO:0007669"/>
    <property type="project" value="UniProtKB-UniRule"/>
</dbReference>
<dbReference type="GO" id="GO:0005975">
    <property type="term" value="P:carbohydrate metabolic process"/>
    <property type="evidence" value="ECO:0007669"/>
    <property type="project" value="InterPro"/>
</dbReference>
<dbReference type="GO" id="GO:0046761">
    <property type="term" value="P:viral budding from plasma membrane"/>
    <property type="evidence" value="ECO:0007669"/>
    <property type="project" value="UniProtKB-UniRule"/>
</dbReference>
<dbReference type="Gene3D" id="2.120.10.10">
    <property type="match status" value="1"/>
</dbReference>
<dbReference type="HAMAP" id="MF_04071">
    <property type="entry name" value="INFV_NRAM"/>
    <property type="match status" value="1"/>
</dbReference>
<dbReference type="InterPro" id="IPR001860">
    <property type="entry name" value="Glyco_hydro_34"/>
</dbReference>
<dbReference type="InterPro" id="IPR036278">
    <property type="entry name" value="Sialidase_sf"/>
</dbReference>
<dbReference type="Pfam" id="PF00064">
    <property type="entry name" value="Neur"/>
    <property type="match status" value="1"/>
</dbReference>
<dbReference type="SUPFAM" id="SSF50939">
    <property type="entry name" value="Sialidases"/>
    <property type="match status" value="1"/>
</dbReference>
<reference key="1">
    <citation type="submission" date="2002-12" db="EMBL/GenBank/DDBJ databases">
        <title>Genetic analysis of multiple N3, N4, and N6 influenza A virus neuraminidase genes.</title>
        <authorList>
            <person name="Webby R.J."/>
            <person name="Humberd J.L."/>
            <person name="Krauss S.L."/>
        </authorList>
    </citation>
    <scope>NUCLEOTIDE SEQUENCE [GENOMIC RNA]</scope>
</reference>
<reference key="2">
    <citation type="journal article" date="2006" name="Science">
        <title>Large-scale sequence analysis of avian influenza isolates.</title>
        <authorList>
            <person name="Obenauer J.C."/>
            <person name="Denson J."/>
            <person name="Mehta P.K."/>
            <person name="Su X."/>
            <person name="Mukatira S."/>
            <person name="Finkelstein D.B."/>
            <person name="Xu X."/>
            <person name="Wang J."/>
            <person name="Ma J."/>
            <person name="Fan Y."/>
            <person name="Rakestraw K.M."/>
            <person name="Webster R.G."/>
            <person name="Hoffmann E."/>
            <person name="Krauss S."/>
            <person name="Zheng J."/>
            <person name="Zhang Z."/>
            <person name="Naeve C.W."/>
        </authorList>
    </citation>
    <scope>NUCLEOTIDE SEQUENCE [GENOMIC RNA]</scope>
</reference>
<reference key="3">
    <citation type="submission" date="2006-12" db="EMBL/GenBank/DDBJ databases">
        <title>Establishment of gene library of all haemagglutinin (HA) and neuraminidase (NA) subtypes for the control of influenza A virus infection.</title>
        <authorList>
            <person name="Tanaka Y."/>
            <person name="Kida H."/>
            <person name="Sakoda Y."/>
        </authorList>
    </citation>
    <scope>NUCLEOTIDE SEQUENCE [GENOMIC RNA]</scope>
</reference>
<reference key="4">
    <citation type="journal article" date="1982" name="Biochemistry">
        <title>Variation in the membrane-insertion and 'stalk' sequences in eight subtypes of influenza type A virus neuraminidase.</title>
        <authorList>
            <person name="Blok J."/>
            <person name="Air G.M."/>
        </authorList>
    </citation>
    <scope>NUCLEOTIDE SEQUENCE [GENOMIC RNA] OF 1-79</scope>
</reference>
<reference key="5">
    <citation type="journal article" date="2004" name="Virus Res.">
        <title>Assembly and budding of influenza virus.</title>
        <authorList>
            <person name="Nayak D.P."/>
            <person name="Hui E.K."/>
            <person name="Barman S."/>
        </authorList>
    </citation>
    <scope>REVIEW</scope>
</reference>
<reference key="6">
    <citation type="journal article" date="2005" name="N. Engl. J. Med.">
        <title>Neuraminidase inhibitors for influenza.</title>
        <authorList>
            <person name="Moscona A."/>
        </authorList>
    </citation>
    <scope>REVIEW</scope>
</reference>
<reference key="7">
    <citation type="journal article" date="2005" name="Biol. Pharm. Bull.">
        <title>Sialobiology of influenza: molecular mechanism of host range variation of influenza viruses.</title>
        <authorList>
            <person name="Suzuki Y."/>
        </authorList>
    </citation>
    <scope>REVIEW</scope>
</reference>
<organism>
    <name type="scientific">Influenza A virus (strain A/Turkey/Ontario/6118/1968 H8N4)</name>
    <dbReference type="NCBI Taxonomy" id="311175"/>
    <lineage>
        <taxon>Viruses</taxon>
        <taxon>Riboviria</taxon>
        <taxon>Orthornavirae</taxon>
        <taxon>Negarnaviricota</taxon>
        <taxon>Polyploviricotina</taxon>
        <taxon>Insthoviricetes</taxon>
        <taxon>Articulavirales</taxon>
        <taxon>Orthomyxoviridae</taxon>
        <taxon>Alphainfluenzavirus</taxon>
        <taxon>Alphainfluenzavirus influenzae</taxon>
        <taxon>Influenza A virus</taxon>
    </lineage>
</organism>
<organismHost>
    <name type="scientific">Aves</name>
    <dbReference type="NCBI Taxonomy" id="8782"/>
</organismHost>
<accession>P03477</accession>
<accession>Q6XV48</accession>
<feature type="chain" id="PRO_0000078718" description="Neuraminidase">
    <location>
        <begin position="1"/>
        <end position="470"/>
    </location>
</feature>
<feature type="topological domain" description="Intravirion" evidence="1">
    <location>
        <begin position="1"/>
        <end position="6"/>
    </location>
</feature>
<feature type="transmembrane region" description="Helical" evidence="1">
    <location>
        <begin position="7"/>
        <end position="27"/>
    </location>
</feature>
<feature type="topological domain" description="Virion surface" evidence="1">
    <location>
        <begin position="28"/>
        <end position="470"/>
    </location>
</feature>
<feature type="region of interest" description="Involved in apical transport and lipid raft association" evidence="1">
    <location>
        <begin position="11"/>
        <end position="33"/>
    </location>
</feature>
<feature type="region of interest" description="Hypervariable stalk region" evidence="1">
    <location>
        <begin position="36"/>
        <end position="88"/>
    </location>
</feature>
<feature type="region of interest" description="Head of neuraminidase" evidence="1">
    <location>
        <begin position="90"/>
        <end position="470"/>
    </location>
</feature>
<feature type="active site" description="Proton donor/acceptor" evidence="1">
    <location>
        <position position="150"/>
    </location>
</feature>
<feature type="active site" description="Nucleophile" evidence="1">
    <location>
        <position position="403"/>
    </location>
</feature>
<feature type="binding site" evidence="1">
    <location>
        <position position="117"/>
    </location>
    <ligand>
        <name>substrate</name>
    </ligand>
</feature>
<feature type="binding site" evidence="1">
    <location>
        <position position="151"/>
    </location>
    <ligand>
        <name>substrate</name>
    </ligand>
</feature>
<feature type="binding site" evidence="1">
    <location>
        <begin position="276"/>
        <end position="277"/>
    </location>
    <ligand>
        <name>substrate</name>
    </ligand>
</feature>
<feature type="binding site" evidence="1">
    <location>
        <position position="292"/>
    </location>
    <ligand>
        <name>substrate</name>
    </ligand>
</feature>
<feature type="binding site" evidence="1">
    <location>
        <position position="293"/>
    </location>
    <ligand>
        <name>Ca(2+)</name>
        <dbReference type="ChEBI" id="CHEBI:29108"/>
    </ligand>
</feature>
<feature type="binding site" evidence="1">
    <location>
        <position position="297"/>
    </location>
    <ligand>
        <name>Ca(2+)</name>
        <dbReference type="ChEBI" id="CHEBI:29108"/>
    </ligand>
</feature>
<feature type="binding site" evidence="1">
    <location>
        <position position="323"/>
    </location>
    <ligand>
        <name>Ca(2+)</name>
        <dbReference type="ChEBI" id="CHEBI:29108"/>
    </ligand>
</feature>
<feature type="binding site" evidence="1">
    <location>
        <position position="369"/>
    </location>
    <ligand>
        <name>substrate</name>
    </ligand>
</feature>
<feature type="glycosylation site" description="N-linked (GlcNAc...) asparagine; by host" evidence="1">
    <location>
        <position position="50"/>
    </location>
</feature>
<feature type="glycosylation site" description="N-linked (GlcNAc...) asparagine; by host" evidence="1">
    <location>
        <position position="51"/>
    </location>
</feature>
<feature type="glycosylation site" description="N-linked (GlcNAc...) asparagine; by host" evidence="1">
    <location>
        <position position="57"/>
    </location>
</feature>
<feature type="glycosylation site" description="N-linked (GlcNAc...) asparagine; by host" evidence="1">
    <location>
        <position position="62"/>
    </location>
</feature>
<feature type="glycosylation site" description="N-linked (GlcNAc...) asparagine; by host" evidence="1">
    <location>
        <position position="69"/>
    </location>
</feature>
<feature type="glycosylation site" description="N-linked (GlcNAc...) asparagine; by host" evidence="1">
    <location>
        <position position="145"/>
    </location>
</feature>
<feature type="glycosylation site" description="N-linked (GlcNAc...) asparagine; by host" evidence="1">
    <location>
        <position position="269"/>
    </location>
</feature>
<feature type="glycosylation site" description="N-linked (GlcNAc...) asparagine; by host" evidence="1">
    <location>
        <position position="399"/>
    </location>
</feature>
<feature type="glycosylation site" description="N-linked (GlcNAc...) asparagine; by host" evidence="1">
    <location>
        <position position="417"/>
    </location>
</feature>
<feature type="disulfide bond" evidence="1">
    <location>
        <begin position="91"/>
        <end position="418"/>
    </location>
</feature>
<feature type="disulfide bond" evidence="1">
    <location>
        <begin position="123"/>
        <end position="128"/>
    </location>
</feature>
<feature type="disulfide bond" evidence="1">
    <location>
        <begin position="183"/>
        <end position="230"/>
    </location>
</feature>
<feature type="disulfide bond" evidence="1">
    <location>
        <begin position="232"/>
        <end position="237"/>
    </location>
</feature>
<feature type="disulfide bond" evidence="1">
    <location>
        <begin position="278"/>
        <end position="291"/>
    </location>
</feature>
<feature type="disulfide bond" evidence="1">
    <location>
        <begin position="280"/>
        <end position="289"/>
    </location>
</feature>
<feature type="disulfide bond" evidence="1">
    <location>
        <begin position="317"/>
        <end position="334"/>
    </location>
</feature>
<feature type="disulfide bond" evidence="1">
    <location>
        <begin position="422"/>
        <end position="447"/>
    </location>
</feature>
<feature type="sequence conflict" description="In Ref. 4; AAA43364/CAA24277." ref="4">
    <original>Q</original>
    <variation>P</variation>
    <location>
        <position position="25"/>
    </location>
</feature>
<feature type="sequence conflict" description="In Ref. 4; AAA43364/CAA24277." ref="4">
    <original>V</original>
    <variation>G</variation>
    <location>
        <position position="40"/>
    </location>
</feature>
<feature type="sequence conflict" description="In Ref. 4; AAA43364/CAA24277." ref="4">
    <original>NNTTNYY</original>
    <variation>TTQRITI</variation>
    <location>
        <begin position="50"/>
        <end position="56"/>
    </location>
</feature>
<feature type="sequence conflict" description="In Ref. 4; AAA43364/CAA24277." ref="4">
    <original>EPSA</original>
    <variation>DPQP</variation>
    <location>
        <begin position="75"/>
        <end position="78"/>
    </location>
</feature>
<keyword id="KW-0106">Calcium</keyword>
<keyword id="KW-1015">Disulfide bond</keyword>
<keyword id="KW-0325">Glycoprotein</keyword>
<keyword id="KW-0326">Glycosidase</keyword>
<keyword id="KW-1032">Host cell membrane</keyword>
<keyword id="KW-1043">Host membrane</keyword>
<keyword id="KW-0378">Hydrolase</keyword>
<keyword id="KW-0472">Membrane</keyword>
<keyword id="KW-0479">Metal-binding</keyword>
<keyword id="KW-0735">Signal-anchor</keyword>
<keyword id="KW-0812">Transmembrane</keyword>
<keyword id="KW-1133">Transmembrane helix</keyword>
<keyword id="KW-0946">Virion</keyword>
<gene>
    <name evidence="1" type="primary">NA</name>
</gene>
<protein>
    <recommendedName>
        <fullName evidence="1">Neuraminidase</fullName>
        <ecNumber evidence="1">3.2.1.18</ecNumber>
    </recommendedName>
</protein>
<proteinExistence type="inferred from homology"/>
<sequence>MNPNQKIITIGSASIVLTTIGLLLQITSLCSIWFSHYNQVTQPHEQACSNNTTNYYNETFVNVTNVQNNYTTIIEPSAPNVVHYSSGRDLCPVKGWAPLSKDNGIRIGSRGEVFVIREPFISCSISECRTFFLTQGALLNDKHSNGTVKDRSPFRTLMSCPMGVAPSPSNSRFESVAWSATACSDGPGWLTLGITGPDATAVAVLKYNGIITDTLKSWKGNIMRTQESECVCQDEFCYTLITDGPSNAQAFYKILKIRKGKIVSVKDVNATGFHFEECSCYPSGTDVECVCRDNWRGSNRPWIRFNSDLDYQIGYVCSGIFGDNPRPVDGIGSCNSPVNNGKGRYGVKGFSFRYGDGVWIGRTKSLESRSGFEMVWDANGWVSTDKDSNGVQDIIDNNNWSGYSGSFSIRWETTGRNCTVPCFWVEMIRGQPKEKTIWTSGSSIAFCGVNSDTTGWSWPDGALLPFDIDK</sequence>